<comment type="function">
    <text evidence="1">Catalyzes the ATP-dependent phosphorylation of N-acetyl-L-glutamate.</text>
</comment>
<comment type="catalytic activity">
    <reaction evidence="1">
        <text>N-acetyl-L-glutamate + ATP = N-acetyl-L-glutamyl 5-phosphate + ADP</text>
        <dbReference type="Rhea" id="RHEA:14629"/>
        <dbReference type="ChEBI" id="CHEBI:30616"/>
        <dbReference type="ChEBI" id="CHEBI:44337"/>
        <dbReference type="ChEBI" id="CHEBI:57936"/>
        <dbReference type="ChEBI" id="CHEBI:456216"/>
        <dbReference type="EC" id="2.7.2.8"/>
    </reaction>
</comment>
<comment type="pathway">
    <text evidence="1">Amino-acid biosynthesis; L-arginine biosynthesis; N(2)-acetyl-L-ornithine from L-glutamate: step 2/4.</text>
</comment>
<comment type="subcellular location">
    <subcellularLocation>
        <location evidence="1">Cytoplasm</location>
    </subcellularLocation>
</comment>
<comment type="similarity">
    <text evidence="1">Belongs to the acetylglutamate kinase family. ArgB subfamily.</text>
</comment>
<evidence type="ECO:0000255" key="1">
    <source>
        <dbReference type="HAMAP-Rule" id="MF_00082"/>
    </source>
</evidence>
<gene>
    <name evidence="1" type="primary">argB</name>
    <name type="ordered locus">Oant_1358</name>
</gene>
<feature type="chain" id="PRO_1000010520" description="Acetylglutamate kinase">
    <location>
        <begin position="1"/>
        <end position="296"/>
    </location>
</feature>
<feature type="binding site" evidence="1">
    <location>
        <begin position="67"/>
        <end position="68"/>
    </location>
    <ligand>
        <name>substrate</name>
    </ligand>
</feature>
<feature type="binding site" evidence="1">
    <location>
        <position position="89"/>
    </location>
    <ligand>
        <name>substrate</name>
    </ligand>
</feature>
<feature type="binding site" evidence="1">
    <location>
        <position position="194"/>
    </location>
    <ligand>
        <name>substrate</name>
    </ligand>
</feature>
<feature type="site" description="Transition state stabilizer" evidence="1">
    <location>
        <position position="32"/>
    </location>
</feature>
<feature type="site" description="Transition state stabilizer" evidence="1">
    <location>
        <position position="254"/>
    </location>
</feature>
<sequence length="296" mass="31499">MTTLENPEMQAQLLSAALPYMQRYENKHVVVKYGGHAMGNPELGKAFARDIALLKQSGINPIVVHGGGPQIQAMLTKLGIESRFEGGLRVTDEKTVEVVEMVLAGSINKEIVALINAEGEWAIGLCGKDGNMVFAQKAHKTVIDPDSNIEKVLDLGFVGEPAEVDRTLLDLLARSEMIPVIAPVAPGRDGHTYNINADTFAGAIAGALAATRLLFLTDVPGVLDKDKNLIKELSVADAQALIKDGTISGGMIPKVETCIEAIRRGVEGVVILNGKTPHSVLLELFTEHGAGTLIVP</sequence>
<keyword id="KW-0028">Amino-acid biosynthesis</keyword>
<keyword id="KW-0055">Arginine biosynthesis</keyword>
<keyword id="KW-0067">ATP-binding</keyword>
<keyword id="KW-0963">Cytoplasm</keyword>
<keyword id="KW-0418">Kinase</keyword>
<keyword id="KW-0547">Nucleotide-binding</keyword>
<keyword id="KW-1185">Reference proteome</keyword>
<keyword id="KW-0808">Transferase</keyword>
<dbReference type="EC" id="2.7.2.8" evidence="1"/>
<dbReference type="EMBL" id="CP000758">
    <property type="protein sequence ID" value="ABS14075.1"/>
    <property type="molecule type" value="Genomic_DNA"/>
</dbReference>
<dbReference type="RefSeq" id="WP_010659426.1">
    <property type="nucleotide sequence ID" value="NC_009667.1"/>
</dbReference>
<dbReference type="SMR" id="A6WYM1"/>
<dbReference type="STRING" id="439375.Oant_1358"/>
<dbReference type="GeneID" id="61318138"/>
<dbReference type="KEGG" id="oan:Oant_1358"/>
<dbReference type="eggNOG" id="COG0548">
    <property type="taxonomic scope" value="Bacteria"/>
</dbReference>
<dbReference type="HOGENOM" id="CLU_053680_0_0_5"/>
<dbReference type="PhylomeDB" id="A6WYM1"/>
<dbReference type="UniPathway" id="UPA00068">
    <property type="reaction ID" value="UER00107"/>
</dbReference>
<dbReference type="Proteomes" id="UP000002301">
    <property type="component" value="Chromosome 1"/>
</dbReference>
<dbReference type="GO" id="GO:0005737">
    <property type="term" value="C:cytoplasm"/>
    <property type="evidence" value="ECO:0007669"/>
    <property type="project" value="UniProtKB-SubCell"/>
</dbReference>
<dbReference type="GO" id="GO:0003991">
    <property type="term" value="F:acetylglutamate kinase activity"/>
    <property type="evidence" value="ECO:0007669"/>
    <property type="project" value="UniProtKB-UniRule"/>
</dbReference>
<dbReference type="GO" id="GO:0005524">
    <property type="term" value="F:ATP binding"/>
    <property type="evidence" value="ECO:0007669"/>
    <property type="project" value="UniProtKB-UniRule"/>
</dbReference>
<dbReference type="GO" id="GO:0042450">
    <property type="term" value="P:arginine biosynthetic process via ornithine"/>
    <property type="evidence" value="ECO:0007669"/>
    <property type="project" value="UniProtKB-UniRule"/>
</dbReference>
<dbReference type="GO" id="GO:0006526">
    <property type="term" value="P:L-arginine biosynthetic process"/>
    <property type="evidence" value="ECO:0007669"/>
    <property type="project" value="UniProtKB-UniPathway"/>
</dbReference>
<dbReference type="CDD" id="cd04250">
    <property type="entry name" value="AAK_NAGK-C"/>
    <property type="match status" value="1"/>
</dbReference>
<dbReference type="FunFam" id="3.40.1160.10:FF:000004">
    <property type="entry name" value="Acetylglutamate kinase"/>
    <property type="match status" value="1"/>
</dbReference>
<dbReference type="Gene3D" id="3.40.1160.10">
    <property type="entry name" value="Acetylglutamate kinase-like"/>
    <property type="match status" value="1"/>
</dbReference>
<dbReference type="HAMAP" id="MF_00082">
    <property type="entry name" value="ArgB"/>
    <property type="match status" value="1"/>
</dbReference>
<dbReference type="InterPro" id="IPR036393">
    <property type="entry name" value="AceGlu_kinase-like_sf"/>
</dbReference>
<dbReference type="InterPro" id="IPR004662">
    <property type="entry name" value="AcgluKinase_fam"/>
</dbReference>
<dbReference type="InterPro" id="IPR037528">
    <property type="entry name" value="ArgB"/>
</dbReference>
<dbReference type="InterPro" id="IPR001048">
    <property type="entry name" value="Asp/Glu/Uridylate_kinase"/>
</dbReference>
<dbReference type="InterPro" id="IPR041727">
    <property type="entry name" value="NAGK-C"/>
</dbReference>
<dbReference type="NCBIfam" id="TIGR00761">
    <property type="entry name" value="argB"/>
    <property type="match status" value="1"/>
</dbReference>
<dbReference type="PANTHER" id="PTHR23342">
    <property type="entry name" value="N-ACETYLGLUTAMATE SYNTHASE"/>
    <property type="match status" value="1"/>
</dbReference>
<dbReference type="PANTHER" id="PTHR23342:SF0">
    <property type="entry name" value="N-ACETYLGLUTAMATE SYNTHASE, MITOCHONDRIAL"/>
    <property type="match status" value="1"/>
</dbReference>
<dbReference type="Pfam" id="PF00696">
    <property type="entry name" value="AA_kinase"/>
    <property type="match status" value="1"/>
</dbReference>
<dbReference type="PIRSF" id="PIRSF000728">
    <property type="entry name" value="NAGK"/>
    <property type="match status" value="1"/>
</dbReference>
<dbReference type="SUPFAM" id="SSF53633">
    <property type="entry name" value="Carbamate kinase-like"/>
    <property type="match status" value="1"/>
</dbReference>
<name>ARGB_BRUA4</name>
<protein>
    <recommendedName>
        <fullName evidence="1">Acetylglutamate kinase</fullName>
        <ecNumber evidence="1">2.7.2.8</ecNumber>
    </recommendedName>
    <alternativeName>
        <fullName evidence="1">N-acetyl-L-glutamate 5-phosphotransferase</fullName>
    </alternativeName>
    <alternativeName>
        <fullName evidence="1">NAG kinase</fullName>
        <shortName evidence="1">NAGK</shortName>
    </alternativeName>
</protein>
<reference key="1">
    <citation type="journal article" date="2011" name="J. Bacteriol.">
        <title>Genome of Ochrobactrum anthropi ATCC 49188 T, a versatile opportunistic pathogen and symbiont of several eukaryotic hosts.</title>
        <authorList>
            <person name="Chain P.S."/>
            <person name="Lang D.M."/>
            <person name="Comerci D.J."/>
            <person name="Malfatti S.A."/>
            <person name="Vergez L.M."/>
            <person name="Shin M."/>
            <person name="Ugalde R.A."/>
            <person name="Garcia E."/>
            <person name="Tolmasky M.E."/>
        </authorList>
    </citation>
    <scope>NUCLEOTIDE SEQUENCE [LARGE SCALE GENOMIC DNA]</scope>
    <source>
        <strain>ATCC 49188 / DSM 6882 / CCUG 24695 / JCM 21032 / LMG 3331 / NBRC 15819 / NCTC 12168 / Alc 37</strain>
    </source>
</reference>
<proteinExistence type="inferred from homology"/>
<organism>
    <name type="scientific">Brucella anthropi (strain ATCC 49188 / DSM 6882 / CCUG 24695 / JCM 21032 / LMG 3331 / NBRC 15819 / NCTC 12168 / Alc 37)</name>
    <name type="common">Ochrobactrum anthropi</name>
    <dbReference type="NCBI Taxonomy" id="439375"/>
    <lineage>
        <taxon>Bacteria</taxon>
        <taxon>Pseudomonadati</taxon>
        <taxon>Pseudomonadota</taxon>
        <taxon>Alphaproteobacteria</taxon>
        <taxon>Hyphomicrobiales</taxon>
        <taxon>Brucellaceae</taxon>
        <taxon>Brucella/Ochrobactrum group</taxon>
        <taxon>Brucella</taxon>
    </lineage>
</organism>
<accession>A6WYM1</accession>